<evidence type="ECO:0000256" key="1">
    <source>
        <dbReference type="SAM" id="MobiDB-lite"/>
    </source>
</evidence>
<evidence type="ECO:0000305" key="2"/>
<evidence type="ECO:0000312" key="3">
    <source>
        <dbReference type="Araport" id="AT3G43530"/>
    </source>
</evidence>
<evidence type="ECO:0000312" key="4">
    <source>
        <dbReference type="EMBL" id="CAB81793.1"/>
    </source>
</evidence>
<evidence type="ECO:0007744" key="5">
    <source>
    </source>
</evidence>
<feature type="chain" id="PRO_0000433104" description="Uncharacterized protein At3g43530">
    <location>
        <begin position="1"/>
        <end position="615"/>
    </location>
</feature>
<feature type="region of interest" description="Disordered" evidence="1">
    <location>
        <begin position="424"/>
        <end position="615"/>
    </location>
</feature>
<feature type="compositionally biased region" description="Acidic residues" evidence="1">
    <location>
        <begin position="424"/>
        <end position="433"/>
    </location>
</feature>
<feature type="compositionally biased region" description="Basic and acidic residues" evidence="1">
    <location>
        <begin position="439"/>
        <end position="476"/>
    </location>
</feature>
<feature type="compositionally biased region" description="Basic and acidic residues" evidence="1">
    <location>
        <begin position="484"/>
        <end position="496"/>
    </location>
</feature>
<feature type="compositionally biased region" description="Basic and acidic residues" evidence="1">
    <location>
        <begin position="504"/>
        <end position="521"/>
    </location>
</feature>
<feature type="compositionally biased region" description="Basic and acidic residues" evidence="1">
    <location>
        <begin position="529"/>
        <end position="561"/>
    </location>
</feature>
<feature type="compositionally biased region" description="Basic residues" evidence="1">
    <location>
        <begin position="579"/>
        <end position="589"/>
    </location>
</feature>
<feature type="compositionally biased region" description="Basic residues" evidence="1">
    <location>
        <begin position="606"/>
        <end position="615"/>
    </location>
</feature>
<feature type="modified residue" description="Phosphoserine" evidence="5">
    <location>
        <position position="48"/>
    </location>
</feature>
<reference key="1">
    <citation type="journal article" date="2000" name="Nature">
        <title>Sequence and analysis of chromosome 3 of the plant Arabidopsis thaliana.</title>
        <authorList>
            <person name="Salanoubat M."/>
            <person name="Lemcke K."/>
            <person name="Rieger M."/>
            <person name="Ansorge W."/>
            <person name="Unseld M."/>
            <person name="Fartmann B."/>
            <person name="Valle G."/>
            <person name="Bloecker H."/>
            <person name="Perez-Alonso M."/>
            <person name="Obermaier B."/>
            <person name="Delseny M."/>
            <person name="Boutry M."/>
            <person name="Grivell L.A."/>
            <person name="Mache R."/>
            <person name="Puigdomenech P."/>
            <person name="De Simone V."/>
            <person name="Choisne N."/>
            <person name="Artiguenave F."/>
            <person name="Robert C."/>
            <person name="Brottier P."/>
            <person name="Wincker P."/>
            <person name="Cattolico L."/>
            <person name="Weissenbach J."/>
            <person name="Saurin W."/>
            <person name="Quetier F."/>
            <person name="Schaefer M."/>
            <person name="Mueller-Auer S."/>
            <person name="Gabel C."/>
            <person name="Fuchs M."/>
            <person name="Benes V."/>
            <person name="Wurmbach E."/>
            <person name="Drzonek H."/>
            <person name="Erfle H."/>
            <person name="Jordan N."/>
            <person name="Bangert S."/>
            <person name="Wiedelmann R."/>
            <person name="Kranz H."/>
            <person name="Voss H."/>
            <person name="Holland R."/>
            <person name="Brandt P."/>
            <person name="Nyakatura G."/>
            <person name="Vezzi A."/>
            <person name="D'Angelo M."/>
            <person name="Pallavicini A."/>
            <person name="Toppo S."/>
            <person name="Simionati B."/>
            <person name="Conrad A."/>
            <person name="Hornischer K."/>
            <person name="Kauer G."/>
            <person name="Loehnert T.-H."/>
            <person name="Nordsiek G."/>
            <person name="Reichelt J."/>
            <person name="Scharfe M."/>
            <person name="Schoen O."/>
            <person name="Bargues M."/>
            <person name="Terol J."/>
            <person name="Climent J."/>
            <person name="Navarro P."/>
            <person name="Collado C."/>
            <person name="Perez-Perez A."/>
            <person name="Ottenwaelder B."/>
            <person name="Duchemin D."/>
            <person name="Cooke R."/>
            <person name="Laudie M."/>
            <person name="Berger-Llauro C."/>
            <person name="Purnelle B."/>
            <person name="Masuy D."/>
            <person name="de Haan M."/>
            <person name="Maarse A.C."/>
            <person name="Alcaraz J.-P."/>
            <person name="Cottet A."/>
            <person name="Casacuberta E."/>
            <person name="Monfort A."/>
            <person name="Argiriou A."/>
            <person name="Flores M."/>
            <person name="Liguori R."/>
            <person name="Vitale D."/>
            <person name="Mannhaupt G."/>
            <person name="Haase D."/>
            <person name="Schoof H."/>
            <person name="Rudd S."/>
            <person name="Zaccaria P."/>
            <person name="Mewes H.-W."/>
            <person name="Mayer K.F.X."/>
            <person name="Kaul S."/>
            <person name="Town C.D."/>
            <person name="Koo H.L."/>
            <person name="Tallon L.J."/>
            <person name="Jenkins J."/>
            <person name="Rooney T."/>
            <person name="Rizzo M."/>
            <person name="Walts A."/>
            <person name="Utterback T."/>
            <person name="Fujii C.Y."/>
            <person name="Shea T.P."/>
            <person name="Creasy T.H."/>
            <person name="Haas B."/>
            <person name="Maiti R."/>
            <person name="Wu D."/>
            <person name="Peterson J."/>
            <person name="Van Aken S."/>
            <person name="Pai G."/>
            <person name="Militscher J."/>
            <person name="Sellers P."/>
            <person name="Gill J.E."/>
            <person name="Feldblyum T.V."/>
            <person name="Preuss D."/>
            <person name="Lin X."/>
            <person name="Nierman W.C."/>
            <person name="Salzberg S.L."/>
            <person name="White O."/>
            <person name="Venter J.C."/>
            <person name="Fraser C.M."/>
            <person name="Kaneko T."/>
            <person name="Nakamura Y."/>
            <person name="Sato S."/>
            <person name="Kato T."/>
            <person name="Asamizu E."/>
            <person name="Sasamoto S."/>
            <person name="Kimura T."/>
            <person name="Idesawa K."/>
            <person name="Kawashima K."/>
            <person name="Kishida Y."/>
            <person name="Kiyokawa C."/>
            <person name="Kohara M."/>
            <person name="Matsumoto M."/>
            <person name="Matsuno A."/>
            <person name="Muraki A."/>
            <person name="Nakayama S."/>
            <person name="Nakazaki N."/>
            <person name="Shinpo S."/>
            <person name="Takeuchi C."/>
            <person name="Wada T."/>
            <person name="Watanabe A."/>
            <person name="Yamada M."/>
            <person name="Yasuda M."/>
            <person name="Tabata S."/>
        </authorList>
    </citation>
    <scope>NUCLEOTIDE SEQUENCE [LARGE SCALE GENOMIC DNA]</scope>
    <source>
        <strain>cv. Columbia</strain>
    </source>
</reference>
<reference key="2">
    <citation type="journal article" date="2017" name="Plant J.">
        <title>Araport11: a complete reannotation of the Arabidopsis thaliana reference genome.</title>
        <authorList>
            <person name="Cheng C.Y."/>
            <person name="Krishnakumar V."/>
            <person name="Chan A.P."/>
            <person name="Thibaud-Nissen F."/>
            <person name="Schobel S."/>
            <person name="Town C.D."/>
        </authorList>
    </citation>
    <scope>GENOME REANNOTATION</scope>
    <source>
        <strain>cv. Columbia</strain>
    </source>
</reference>
<reference key="3">
    <citation type="journal article" date="2009" name="J. Proteomics">
        <title>Phosphoproteomic analysis of nuclei-enriched fractions from Arabidopsis thaliana.</title>
        <authorList>
            <person name="Jones A.M.E."/>
            <person name="MacLean D."/>
            <person name="Studholme D.J."/>
            <person name="Serna-Sanz A."/>
            <person name="Andreasson E."/>
            <person name="Rathjen J.P."/>
            <person name="Peck S.C."/>
        </authorList>
    </citation>
    <scope>PHOSPHORYLATION [LARGE SCALE ANALYSIS] AT SER-48</scope>
    <scope>IDENTIFICATION BY MASS SPECTROMETRY [LARGE SCALE ANALYSIS]</scope>
    <source>
        <strain>cv. Columbia</strain>
    </source>
</reference>
<sequence length="615" mass="69265">MARTKNAGVPLAAEVVSQTINDEVVVASAAEVDSEATNLISNDDRADSDEETEALQPLKMYFGPSDYTKPFKITAKCYLHKAVGLLESHLEESELKWFLEHPQFKHFFHMHKDPNHKVMGMWLLFIRTTCLDKKGSMVYCQWRTDPMFGPGATIQYPDVEKKLLSMKKPSEARLRVVVLYFLCNRWKGVVADLELCKTFPWGKNAFEENYLAFEAIPVLRKNFCEDIESADPQCPRMCKMKFKSSTMKGFPMSDVYDKLGTTKSILAPTPDENLLLKRIMDKECGVNDVDDLIADGWKKRLVDEERTICFEPLFNEDVAHQSFVANNAPSTVVQAPRKAAVEKKGKGKTAAALTSPSDEGLTEVVNEMKNLMENGFKSMNKRMTNFSKKYEEQDKRLKLMETAIKSIQSSTGTDDAYGSKEIDDRENELEEGSDANGGDNEREVREKETEIDKEVAQGDNEREVGEKETEIDKEVGQGDSDIFDGNKDMELNKEVAESTIGVAESEKDKEVTESEKDKEVAESEIGVPESEKDIEVADSEKDKEVPQDDEMDGGKVTEPSKKRGKSHDDGDDPSEGCVKKPKVVKKVAKSRTDAKPVYRSPIQTRYARKKTKKNV</sequence>
<accession>Q9M237</accession>
<organism>
    <name type="scientific">Arabidopsis thaliana</name>
    <name type="common">Mouse-ear cress</name>
    <dbReference type="NCBI Taxonomy" id="3702"/>
    <lineage>
        <taxon>Eukaryota</taxon>
        <taxon>Viridiplantae</taxon>
        <taxon>Streptophyta</taxon>
        <taxon>Embryophyta</taxon>
        <taxon>Tracheophyta</taxon>
        <taxon>Spermatophyta</taxon>
        <taxon>Magnoliopsida</taxon>
        <taxon>eudicotyledons</taxon>
        <taxon>Gunneridae</taxon>
        <taxon>Pentapetalae</taxon>
        <taxon>rosids</taxon>
        <taxon>malvids</taxon>
        <taxon>Brassicales</taxon>
        <taxon>Brassicaceae</taxon>
        <taxon>Camelineae</taxon>
        <taxon>Arabidopsis</taxon>
    </lineage>
</organism>
<protein>
    <recommendedName>
        <fullName evidence="2">Uncharacterized protein At3g43530</fullName>
    </recommendedName>
</protein>
<proteinExistence type="evidence at protein level"/>
<keyword id="KW-0597">Phosphoprotein</keyword>
<keyword id="KW-1185">Reference proteome</keyword>
<name>Y3353_ARATH</name>
<gene>
    <name evidence="3" type="ordered locus">At3g43530</name>
    <name evidence="4" type="ORF">T18D12_100</name>
</gene>
<dbReference type="EMBL" id="AL138644">
    <property type="protein sequence ID" value="CAB81793.1"/>
    <property type="molecule type" value="Genomic_DNA"/>
</dbReference>
<dbReference type="EMBL" id="CP002686">
    <property type="status" value="NOT_ANNOTATED_CDS"/>
    <property type="molecule type" value="Genomic_DNA"/>
</dbReference>
<dbReference type="PIR" id="T47395">
    <property type="entry name" value="T47395"/>
</dbReference>
<dbReference type="STRING" id="3702.Q9M237"/>
<dbReference type="iPTMnet" id="Q9M237"/>
<dbReference type="Araport" id="AT3G43530"/>
<dbReference type="TAIR" id="AT3G43530"/>
<dbReference type="InParanoid" id="Q9M237"/>
<dbReference type="PRO" id="PR:Q9M237"/>
<dbReference type="Proteomes" id="UP000006548">
    <property type="component" value="Chromosome 3"/>
</dbReference>
<dbReference type="ExpressionAtlas" id="Q9M237">
    <property type="expression patterns" value="baseline and differential"/>
</dbReference>
<dbReference type="InterPro" id="IPR005048">
    <property type="entry name" value="DUF287"/>
</dbReference>
<dbReference type="Pfam" id="PF03384">
    <property type="entry name" value="DUF287"/>
    <property type="match status" value="1"/>
</dbReference>